<evidence type="ECO:0000250" key="1">
    <source>
        <dbReference type="UniProtKB" id="P80385"/>
    </source>
</evidence>
<evidence type="ECO:0000255" key="2">
    <source>
        <dbReference type="PROSITE-ProRule" id="PRU00703"/>
    </source>
</evidence>
<evidence type="ECO:0000256" key="3">
    <source>
        <dbReference type="SAM" id="MobiDB-lite"/>
    </source>
</evidence>
<evidence type="ECO:0000269" key="4">
    <source>
    </source>
</evidence>
<evidence type="ECO:0000269" key="5">
    <source>
    </source>
</evidence>
<evidence type="ECO:0000269" key="6">
    <source>
    </source>
</evidence>
<evidence type="ECO:0000269" key="7">
    <source>
    </source>
</evidence>
<evidence type="ECO:0000269" key="8">
    <source>
    </source>
</evidence>
<evidence type="ECO:0000269" key="9">
    <source>
    </source>
</evidence>
<evidence type="ECO:0000269" key="10">
    <source>
    </source>
</evidence>
<evidence type="ECO:0000269" key="11">
    <source>
    </source>
</evidence>
<evidence type="ECO:0000303" key="12">
    <source>
    </source>
</evidence>
<evidence type="ECO:0000305" key="13"/>
<evidence type="ECO:0007744" key="14">
    <source>
        <dbReference type="PDB" id="2UV4"/>
    </source>
</evidence>
<evidence type="ECO:0007744" key="15">
    <source>
        <dbReference type="PDB" id="2UV5"/>
    </source>
</evidence>
<evidence type="ECO:0007744" key="16">
    <source>
        <dbReference type="PDB" id="2UV6"/>
    </source>
</evidence>
<evidence type="ECO:0007744" key="17">
    <source>
        <dbReference type="PDB" id="2UV7"/>
    </source>
</evidence>
<evidence type="ECO:0007744" key="18">
    <source>
        <dbReference type="PDB" id="4CFE"/>
    </source>
</evidence>
<evidence type="ECO:0007744" key="19">
    <source>
        <dbReference type="PDB" id="4CFF"/>
    </source>
</evidence>
<evidence type="ECO:0007744" key="20">
    <source>
        <dbReference type="PDB" id="4RER"/>
    </source>
</evidence>
<evidence type="ECO:0007744" key="21">
    <source>
        <dbReference type="PDB" id="4REW"/>
    </source>
</evidence>
<evidence type="ECO:0007744" key="22">
    <source>
        <dbReference type="PDB" id="4ZHX"/>
    </source>
</evidence>
<evidence type="ECO:0007744" key="23">
    <source>
        <dbReference type="PDB" id="5EZV"/>
    </source>
</evidence>
<evidence type="ECO:0007829" key="24">
    <source>
        <dbReference type="PDB" id="2UV4"/>
    </source>
</evidence>
<evidence type="ECO:0007829" key="25">
    <source>
        <dbReference type="PDB" id="5EZV"/>
    </source>
</evidence>
<evidence type="ECO:0007829" key="26">
    <source>
        <dbReference type="PDB" id="6B1U"/>
    </source>
</evidence>
<evidence type="ECO:0007829" key="27">
    <source>
        <dbReference type="PDB" id="6C9F"/>
    </source>
</evidence>
<evidence type="ECO:0007829" key="28">
    <source>
        <dbReference type="PDB" id="6C9G"/>
    </source>
</evidence>
<evidence type="ECO:0007829" key="29">
    <source>
        <dbReference type="PDB" id="8BIK"/>
    </source>
</evidence>
<comment type="function">
    <text evidence="8 10">AMP/ATP-binding subunit of AMP-activated protein kinase (AMPK), an energy sensor protein kinase that plays a key role in regulating cellular energy metabolism (PubMed:21680840, PubMed:24563466). In response to reduction of intracellular ATP levels, AMPK activates energy-producing pathways and inhibits energy-consuming processes: inhibits protein, carbohydrate and lipid biosynthesis, as well as cell growth and proliferation (PubMed:21680840, PubMed:24563466). AMPK acts via direct phosphorylation of metabolic enzymes, and by longer-term effects via phosphorylation of transcription regulators (PubMed:21680840, PubMed:24563466). Also acts as a regulator of cellular polarity by remodeling the actin cytoskeleton; probably by indirectly activating myosin (PubMed:21680840, PubMed:24563466). Gamma non-catalytic subunit mediates binding to AMP, ADP and ATP, leading to activate or inhibit AMPK: AMP-binding results in allosteric activation of alpha catalytic subunit (PRKAA1 or PRKAA2) both by inducing phosphorylation and preventing dephosphorylation of catalytic subunits (PubMed:21680840, PubMed:24563466). ADP also stimulates phosphorylation, without stimulating already phosphorylated catalytic subunit (PubMed:21680840, PubMed:24563466). ATP promotes dephosphorylation of catalytic subunit, rendering the AMPK enzyme inactive (PubMed:21680840, PubMed:24563466).</text>
</comment>
<comment type="subunit">
    <text evidence="4 6 8">AMPK is a heterotrimer of an alpha catalytic subunit (PRKAA1 or PRKAA2), a beta (PRKAB1 or PRKAB2) and a gamma non-catalytic subunits (PRKAG1, PRKAG2 or PRKAG3). Interacts with FNIP1 and FNIP2.</text>
</comment>
<comment type="interaction">
    <interactant intactId="EBI-1181439">
        <id>P54619</id>
    </interactant>
    <interactant intactId="EBI-946029">
        <id>Q6P1W5</id>
        <label>C1orf94</label>
    </interactant>
    <organismsDiffer>false</organismsDiffer>
    <experiments>3</experiments>
</comment>
<comment type="interaction">
    <interactant intactId="EBI-1181439">
        <id>P54619</id>
    </interactant>
    <interactant intactId="EBI-718729">
        <id>P55212</id>
        <label>CASP6</label>
    </interactant>
    <organismsDiffer>false</organismsDiffer>
    <experiments>3</experiments>
</comment>
<comment type="interaction">
    <interactant intactId="EBI-1181439">
        <id>P54619</id>
    </interactant>
    <interactant intactId="EBI-740135">
        <id>P35520</id>
        <label>CBS</label>
    </interactant>
    <organismsDiffer>false</organismsDiffer>
    <experiments>3</experiments>
</comment>
<comment type="interaction">
    <interactant intactId="EBI-1181439">
        <id>P54619</id>
    </interactant>
    <interactant intactId="EBI-751001">
        <id>Q14145</id>
        <label>KEAP1</label>
    </interactant>
    <organismsDiffer>false</organismsDiffer>
    <experiments>6</experiments>
</comment>
<comment type="interaction">
    <interactant intactId="EBI-1181439">
        <id>P54619</id>
    </interactant>
    <interactant intactId="EBI-11959885">
        <id>Q07627</id>
        <label>KRTAP1-1</label>
    </interactant>
    <organismsDiffer>false</organismsDiffer>
    <experiments>3</experiments>
</comment>
<comment type="interaction">
    <interactant intactId="EBI-1181439">
        <id>P54619</id>
    </interactant>
    <interactant intactId="EBI-10217483">
        <id>P60412</id>
        <label>KRTAP10-11</label>
    </interactant>
    <organismsDiffer>false</organismsDiffer>
    <experiments>5</experiments>
</comment>
<comment type="interaction">
    <interactant intactId="EBI-1181439">
        <id>P54619</id>
    </interactant>
    <interactant intactId="EBI-10172150">
        <id>P60370</id>
        <label>KRTAP10-5</label>
    </interactant>
    <organismsDiffer>false</organismsDiffer>
    <experiments>3</experiments>
</comment>
<comment type="interaction">
    <interactant intactId="EBI-1181439">
        <id>P54619</id>
    </interactant>
    <interactant intactId="EBI-739863">
        <id>Q9BQ66</id>
        <label>KRTAP4-12</label>
    </interactant>
    <organismsDiffer>false</organismsDiffer>
    <experiments>3</experiments>
</comment>
<comment type="interaction">
    <interactant intactId="EBI-1181439">
        <id>P54619</id>
    </interactant>
    <interactant intactId="EBI-10172511">
        <id>Q9BYR5</id>
        <label>KRTAP4-2</label>
    </interactant>
    <organismsDiffer>false</organismsDiffer>
    <experiments>3</experiments>
</comment>
<comment type="interaction">
    <interactant intactId="EBI-1181439">
        <id>P54619</id>
    </interactant>
    <interactant intactId="EBI-1044640">
        <id>Q9BYQ4</id>
        <label>KRTAP9-2</label>
    </interactant>
    <organismsDiffer>false</organismsDiffer>
    <experiments>3</experiments>
</comment>
<comment type="interaction">
    <interactant intactId="EBI-1181439">
        <id>P54619</id>
    </interactant>
    <interactant intactId="EBI-11958364">
        <id>Q9BYQ0</id>
        <label>KRTAP9-8</label>
    </interactant>
    <organismsDiffer>false</organismsDiffer>
    <experiments>3</experiments>
</comment>
<comment type="interaction">
    <interactant intactId="EBI-1181439">
        <id>P54619</id>
    </interactant>
    <interactant intactId="EBI-2864512">
        <id>P50221</id>
        <label>MEOX1</label>
    </interactant>
    <organismsDiffer>false</organismsDiffer>
    <experiments>3</experiments>
</comment>
<comment type="interaction">
    <interactant intactId="EBI-1181439">
        <id>P54619</id>
    </interactant>
    <interactant intactId="EBI-16439278">
        <id>Q6FHY5</id>
        <label>MEOX2</label>
    </interactant>
    <organismsDiffer>false</organismsDiffer>
    <experiments>3</experiments>
</comment>
<comment type="interaction">
    <interactant intactId="EBI-1181439">
        <id>P54619</id>
    </interactant>
    <interactant intactId="EBI-747278">
        <id>P26367</id>
        <label>PAX6</label>
    </interactant>
    <organismsDiffer>false</organismsDiffer>
    <experiments>3</experiments>
</comment>
<comment type="interaction">
    <interactant intactId="EBI-1181439">
        <id>P54619</id>
    </interactant>
    <interactant intactId="EBI-742388">
        <id>Q9H8W4</id>
        <label>PLEKHF2</label>
    </interactant>
    <organismsDiffer>false</organismsDiffer>
    <experiments>3</experiments>
</comment>
<comment type="interaction">
    <interactant intactId="EBI-1181439">
        <id>P54619</id>
    </interactant>
    <interactant intactId="EBI-1181405">
        <id>Q13131</id>
        <label>PRKAA1</label>
    </interactant>
    <organismsDiffer>false</organismsDiffer>
    <experiments>17</experiments>
</comment>
<comment type="interaction">
    <interactant intactId="EBI-1181439">
        <id>P54619</id>
    </interactant>
    <interactant intactId="EBI-1383852">
        <id>P54646</id>
        <label>PRKAA2</label>
    </interactant>
    <organismsDiffer>false</organismsDiffer>
    <experiments>14</experiments>
</comment>
<comment type="interaction">
    <interactant intactId="EBI-1181439">
        <id>P54619</id>
    </interactant>
    <interactant intactId="EBI-719769">
        <id>Q9Y478</id>
        <label>PRKAB1</label>
    </interactant>
    <organismsDiffer>false</organismsDiffer>
    <experiments>14</experiments>
</comment>
<comment type="interaction">
    <interactant intactId="EBI-1181439">
        <id>P54619</id>
    </interactant>
    <interactant intactId="EBI-1053424">
        <id>O43741</id>
        <label>PRKAB2</label>
    </interactant>
    <organismsDiffer>false</organismsDiffer>
    <experiments>20</experiments>
</comment>
<comment type="interaction">
    <interactant intactId="EBI-1181439">
        <id>P54619</id>
    </interactant>
    <interactant intactId="EBI-5280197">
        <id>O75400-2</id>
        <label>PRPF40A</label>
    </interactant>
    <organismsDiffer>false</organismsDiffer>
    <experiments>3</experiments>
</comment>
<comment type="interaction">
    <interactant intactId="EBI-1181439">
        <id>P54619</id>
    </interactant>
    <interactant intactId="EBI-10180409">
        <id>Q969V4</id>
        <label>TEKT1</label>
    </interactant>
    <organismsDiffer>false</organismsDiffer>
    <experiments>6</experiments>
</comment>
<comment type="interaction">
    <interactant intactId="EBI-1181439">
        <id>P54619</id>
    </interactant>
    <interactant intactId="EBI-2505861">
        <id>Q13829</id>
        <label>TNFAIP1</label>
    </interactant>
    <organismsDiffer>false</organismsDiffer>
    <experiments>3</experiments>
</comment>
<comment type="alternative products">
    <event type="alternative splicing"/>
    <isoform>
        <id>P54619-1</id>
        <name>1</name>
        <sequence type="displayed"/>
    </isoform>
    <isoform>
        <id>P54619-2</id>
        <name>2</name>
        <sequence type="described" ref="VSP_046711"/>
    </isoform>
    <isoform>
        <id>P54619-3</id>
        <name>3</name>
        <sequence type="described" ref="VSP_046712"/>
    </isoform>
</comment>
<comment type="domain">
    <text>The AMPK pseudosubstrate motif resembles the sequence around sites phosphorylated on target proteins of AMPK, except the presence of a non-phosphorylatable residue in place of Ser. In the absence of AMP this pseudosubstrate sequence may bind to the active site groove on the alpha subunit (PRKAA1 or PRKAA2), preventing phosphorylation by the upstream activating kinase STK11/LKB1.</text>
</comment>
<comment type="domain">
    <text evidence="5 9 11">The 4 CBS domains mediate binding to nucleotides. Of the 4 potential nucleotide-binding sites, 3 are occupied, designated as sites 1, 3, and 4 based on the CBS modules that provide the acidic residue for coordination with the 2'- and 3'-hydroxyl groups of the ribose of AMP. Of these, site 4 appears to be a structural site that retains a tightly held AMP molecule (AMP 3). The 2 remaining sites, 1 and 3, can bind either AMP, ADP or ATP. Site 1 (AMP, ADP or ATP 1) is the high-affinity binding site and likely accommodates AMP or ADP. Site 3 (AMP, ADP or ATP 2) is the weakest nucleotide-binding site on the gamma subunit, yet it is exquisitely sensitive to changes in nucleotide levels and this allows AMPK to respond rapidly to changes in cellular energy status. Site 3 is likely to be responsible for protection of a conserved threonine in the activation loop of the alpha catalytic subunit through conformational changes induced by binding of AMP or ADP.</text>
</comment>
<comment type="PTM">
    <text evidence="7">Phosphorylated by ULK1 and ULK2; leading to negatively regulate AMPK activity and suggesting the existence of a regulatory feedback loop between ULK1, ULK2 and AMPK.</text>
</comment>
<comment type="PTM">
    <text evidence="10">Glycosylated; O-GlcNAcylated by OGT, promoting the AMP-activated protein kinase (AMPK) activity.</text>
</comment>
<comment type="miscellaneous">
    <molecule>Isoform 3</molecule>
    <text evidence="13">May be due to competing acceptor splice site.</text>
</comment>
<comment type="similarity">
    <text evidence="13">Belongs to the 5'-AMP-activated protein kinase gamma subunit family.</text>
</comment>
<organism>
    <name type="scientific">Homo sapiens</name>
    <name type="common">Human</name>
    <dbReference type="NCBI Taxonomy" id="9606"/>
    <lineage>
        <taxon>Eukaryota</taxon>
        <taxon>Metazoa</taxon>
        <taxon>Chordata</taxon>
        <taxon>Craniata</taxon>
        <taxon>Vertebrata</taxon>
        <taxon>Euteleostomi</taxon>
        <taxon>Mammalia</taxon>
        <taxon>Eutheria</taxon>
        <taxon>Euarchontoglires</taxon>
        <taxon>Primates</taxon>
        <taxon>Haplorrhini</taxon>
        <taxon>Catarrhini</taxon>
        <taxon>Hominidae</taxon>
        <taxon>Homo</taxon>
    </lineage>
</organism>
<keyword id="KW-0002">3D-structure</keyword>
<keyword id="KW-0025">Alternative splicing</keyword>
<keyword id="KW-0067">ATP-binding</keyword>
<keyword id="KW-0129">CBS domain</keyword>
<keyword id="KW-0903">Direct protein sequencing</keyword>
<keyword id="KW-0275">Fatty acid biosynthesis</keyword>
<keyword id="KW-0276">Fatty acid metabolism</keyword>
<keyword id="KW-0325">Glycoprotein</keyword>
<keyword id="KW-0444">Lipid biosynthesis</keyword>
<keyword id="KW-0443">Lipid metabolism</keyword>
<keyword id="KW-0547">Nucleotide-binding</keyword>
<keyword id="KW-0597">Phosphoprotein</keyword>
<keyword id="KW-1267">Proteomics identification</keyword>
<keyword id="KW-1185">Reference proteome</keyword>
<keyword id="KW-0677">Repeat</keyword>
<proteinExistence type="evidence at protein level"/>
<reference key="1">
    <citation type="journal article" date="1996" name="J. Biol. Chem.">
        <title>Non-catalytic beta- and gamma-subunit isoforms of the 5'-AMP-activated protein kinase.</title>
        <authorList>
            <person name="Gao G."/>
            <person name="Fernandez C.S."/>
            <person name="Stapleton D."/>
            <person name="Auster A.S."/>
            <person name="Widmer J."/>
            <person name="Dyck J.R.B."/>
            <person name="Kemp B.E."/>
            <person name="Witters L.A."/>
        </authorList>
    </citation>
    <scope>NUCLEOTIDE SEQUENCE [MRNA] (ISOFORM 1)</scope>
    <scope>PARTIAL PROTEIN SEQUENCE</scope>
    <source>
        <tissue>Fetal liver</tissue>
    </source>
</reference>
<reference key="2">
    <citation type="submission" date="2003-05" db="EMBL/GenBank/DDBJ databases">
        <title>Cloning of human full-length CDSs in BD Creator(TM) system donor vector.</title>
        <authorList>
            <person name="Kalnine N."/>
            <person name="Chen X."/>
            <person name="Rolfs A."/>
            <person name="Halleck A."/>
            <person name="Hines L."/>
            <person name="Eisenstein S."/>
            <person name="Koundinya M."/>
            <person name="Raphael J."/>
            <person name="Moreira D."/>
            <person name="Kelley T."/>
            <person name="LaBaer J."/>
            <person name="Lin Y."/>
            <person name="Phelan M."/>
            <person name="Farmer A."/>
        </authorList>
    </citation>
    <scope>NUCLEOTIDE SEQUENCE [LARGE SCALE MRNA] (ISOFORM 1)</scope>
</reference>
<reference key="3">
    <citation type="journal article" date="2004" name="Nat. Genet.">
        <title>Complete sequencing and characterization of 21,243 full-length human cDNAs.</title>
        <authorList>
            <person name="Ota T."/>
            <person name="Suzuki Y."/>
            <person name="Nishikawa T."/>
            <person name="Otsuki T."/>
            <person name="Sugiyama T."/>
            <person name="Irie R."/>
            <person name="Wakamatsu A."/>
            <person name="Hayashi K."/>
            <person name="Sato H."/>
            <person name="Nagai K."/>
            <person name="Kimura K."/>
            <person name="Makita H."/>
            <person name="Sekine M."/>
            <person name="Obayashi M."/>
            <person name="Nishi T."/>
            <person name="Shibahara T."/>
            <person name="Tanaka T."/>
            <person name="Ishii S."/>
            <person name="Yamamoto J."/>
            <person name="Saito K."/>
            <person name="Kawai Y."/>
            <person name="Isono Y."/>
            <person name="Nakamura Y."/>
            <person name="Nagahari K."/>
            <person name="Murakami K."/>
            <person name="Yasuda T."/>
            <person name="Iwayanagi T."/>
            <person name="Wagatsuma M."/>
            <person name="Shiratori A."/>
            <person name="Sudo H."/>
            <person name="Hosoiri T."/>
            <person name="Kaku Y."/>
            <person name="Kodaira H."/>
            <person name="Kondo H."/>
            <person name="Sugawara M."/>
            <person name="Takahashi M."/>
            <person name="Kanda K."/>
            <person name="Yokoi T."/>
            <person name="Furuya T."/>
            <person name="Kikkawa E."/>
            <person name="Omura Y."/>
            <person name="Abe K."/>
            <person name="Kamihara K."/>
            <person name="Katsuta N."/>
            <person name="Sato K."/>
            <person name="Tanikawa M."/>
            <person name="Yamazaki M."/>
            <person name="Ninomiya K."/>
            <person name="Ishibashi T."/>
            <person name="Yamashita H."/>
            <person name="Murakawa K."/>
            <person name="Fujimori K."/>
            <person name="Tanai H."/>
            <person name="Kimata M."/>
            <person name="Watanabe M."/>
            <person name="Hiraoka S."/>
            <person name="Chiba Y."/>
            <person name="Ishida S."/>
            <person name="Ono Y."/>
            <person name="Takiguchi S."/>
            <person name="Watanabe S."/>
            <person name="Yosida M."/>
            <person name="Hotuta T."/>
            <person name="Kusano J."/>
            <person name="Kanehori K."/>
            <person name="Takahashi-Fujii A."/>
            <person name="Hara H."/>
            <person name="Tanase T.-O."/>
            <person name="Nomura Y."/>
            <person name="Togiya S."/>
            <person name="Komai F."/>
            <person name="Hara R."/>
            <person name="Takeuchi K."/>
            <person name="Arita M."/>
            <person name="Imose N."/>
            <person name="Musashino K."/>
            <person name="Yuuki H."/>
            <person name="Oshima A."/>
            <person name="Sasaki N."/>
            <person name="Aotsuka S."/>
            <person name="Yoshikawa Y."/>
            <person name="Matsunawa H."/>
            <person name="Ichihara T."/>
            <person name="Shiohata N."/>
            <person name="Sano S."/>
            <person name="Moriya S."/>
            <person name="Momiyama H."/>
            <person name="Satoh N."/>
            <person name="Takami S."/>
            <person name="Terashima Y."/>
            <person name="Suzuki O."/>
            <person name="Nakagawa S."/>
            <person name="Senoh A."/>
            <person name="Mizoguchi H."/>
            <person name="Goto Y."/>
            <person name="Shimizu F."/>
            <person name="Wakebe H."/>
            <person name="Hishigaki H."/>
            <person name="Watanabe T."/>
            <person name="Sugiyama A."/>
            <person name="Takemoto M."/>
            <person name="Kawakami B."/>
            <person name="Yamazaki M."/>
            <person name="Watanabe K."/>
            <person name="Kumagai A."/>
            <person name="Itakura S."/>
            <person name="Fukuzumi Y."/>
            <person name="Fujimori Y."/>
            <person name="Komiyama M."/>
            <person name="Tashiro H."/>
            <person name="Tanigami A."/>
            <person name="Fujiwara T."/>
            <person name="Ono T."/>
            <person name="Yamada K."/>
            <person name="Fujii Y."/>
            <person name="Ozaki K."/>
            <person name="Hirao M."/>
            <person name="Ohmori Y."/>
            <person name="Kawabata A."/>
            <person name="Hikiji T."/>
            <person name="Kobatake N."/>
            <person name="Inagaki H."/>
            <person name="Ikema Y."/>
            <person name="Okamoto S."/>
            <person name="Okitani R."/>
            <person name="Kawakami T."/>
            <person name="Noguchi S."/>
            <person name="Itoh T."/>
            <person name="Shigeta K."/>
            <person name="Senba T."/>
            <person name="Matsumura K."/>
            <person name="Nakajima Y."/>
            <person name="Mizuno T."/>
            <person name="Morinaga M."/>
            <person name="Sasaki M."/>
            <person name="Togashi T."/>
            <person name="Oyama M."/>
            <person name="Hata H."/>
            <person name="Watanabe M."/>
            <person name="Komatsu T."/>
            <person name="Mizushima-Sugano J."/>
            <person name="Satoh T."/>
            <person name="Shirai Y."/>
            <person name="Takahashi Y."/>
            <person name="Nakagawa K."/>
            <person name="Okumura K."/>
            <person name="Nagase T."/>
            <person name="Nomura N."/>
            <person name="Kikuchi H."/>
            <person name="Masuho Y."/>
            <person name="Yamashita R."/>
            <person name="Nakai K."/>
            <person name="Yada T."/>
            <person name="Nakamura Y."/>
            <person name="Ohara O."/>
            <person name="Isogai T."/>
            <person name="Sugano S."/>
        </authorList>
    </citation>
    <scope>NUCLEOTIDE SEQUENCE [LARGE SCALE MRNA] (ISOFORMS 2 AND 3)</scope>
    <source>
        <tissue>Glial tumor</tissue>
        <tissue>Testis</tissue>
    </source>
</reference>
<reference key="4">
    <citation type="journal article" date="2006" name="Nature">
        <title>The finished DNA sequence of human chromosome 12.</title>
        <authorList>
            <person name="Scherer S.E."/>
            <person name="Muzny D.M."/>
            <person name="Buhay C.J."/>
            <person name="Chen R."/>
            <person name="Cree A."/>
            <person name="Ding Y."/>
            <person name="Dugan-Rocha S."/>
            <person name="Gill R."/>
            <person name="Gunaratne P."/>
            <person name="Harris R.A."/>
            <person name="Hawes A.C."/>
            <person name="Hernandez J."/>
            <person name="Hodgson A.V."/>
            <person name="Hume J."/>
            <person name="Jackson A."/>
            <person name="Khan Z.M."/>
            <person name="Kovar-Smith C."/>
            <person name="Lewis L.R."/>
            <person name="Lozado R.J."/>
            <person name="Metzker M.L."/>
            <person name="Milosavljevic A."/>
            <person name="Miner G.R."/>
            <person name="Montgomery K.T."/>
            <person name="Morgan M.B."/>
            <person name="Nazareth L.V."/>
            <person name="Scott G."/>
            <person name="Sodergren E."/>
            <person name="Song X.-Z."/>
            <person name="Steffen D."/>
            <person name="Lovering R.C."/>
            <person name="Wheeler D.A."/>
            <person name="Worley K.C."/>
            <person name="Yuan Y."/>
            <person name="Zhang Z."/>
            <person name="Adams C.Q."/>
            <person name="Ansari-Lari M.A."/>
            <person name="Ayele M."/>
            <person name="Brown M.J."/>
            <person name="Chen G."/>
            <person name="Chen Z."/>
            <person name="Clerc-Blankenburg K.P."/>
            <person name="Davis C."/>
            <person name="Delgado O."/>
            <person name="Dinh H.H."/>
            <person name="Draper H."/>
            <person name="Gonzalez-Garay M.L."/>
            <person name="Havlak P."/>
            <person name="Jackson L.R."/>
            <person name="Jacob L.S."/>
            <person name="Kelly S.H."/>
            <person name="Li L."/>
            <person name="Li Z."/>
            <person name="Liu J."/>
            <person name="Liu W."/>
            <person name="Lu J."/>
            <person name="Maheshwari M."/>
            <person name="Nguyen B.-V."/>
            <person name="Okwuonu G.O."/>
            <person name="Pasternak S."/>
            <person name="Perez L.M."/>
            <person name="Plopper F.J.H."/>
            <person name="Santibanez J."/>
            <person name="Shen H."/>
            <person name="Tabor P.E."/>
            <person name="Verduzco D."/>
            <person name="Waldron L."/>
            <person name="Wang Q."/>
            <person name="Williams G.A."/>
            <person name="Zhang J."/>
            <person name="Zhou J."/>
            <person name="Allen C.C."/>
            <person name="Amin A.G."/>
            <person name="Anyalebechi V."/>
            <person name="Bailey M."/>
            <person name="Barbaria J.A."/>
            <person name="Bimage K.E."/>
            <person name="Bryant N.P."/>
            <person name="Burch P.E."/>
            <person name="Burkett C.E."/>
            <person name="Burrell K.L."/>
            <person name="Calderon E."/>
            <person name="Cardenas V."/>
            <person name="Carter K."/>
            <person name="Casias K."/>
            <person name="Cavazos I."/>
            <person name="Cavazos S.R."/>
            <person name="Ceasar H."/>
            <person name="Chacko J."/>
            <person name="Chan S.N."/>
            <person name="Chavez D."/>
            <person name="Christopoulos C."/>
            <person name="Chu J."/>
            <person name="Cockrell R."/>
            <person name="Cox C.D."/>
            <person name="Dang M."/>
            <person name="Dathorne S.R."/>
            <person name="David R."/>
            <person name="Davis C.M."/>
            <person name="Davy-Carroll L."/>
            <person name="Deshazo D.R."/>
            <person name="Donlin J.E."/>
            <person name="D'Souza L."/>
            <person name="Eaves K.A."/>
            <person name="Egan A."/>
            <person name="Emery-Cohen A.J."/>
            <person name="Escotto M."/>
            <person name="Flagg N."/>
            <person name="Forbes L.D."/>
            <person name="Gabisi A.M."/>
            <person name="Garza M."/>
            <person name="Hamilton C."/>
            <person name="Henderson N."/>
            <person name="Hernandez O."/>
            <person name="Hines S."/>
            <person name="Hogues M.E."/>
            <person name="Huang M."/>
            <person name="Idlebird D.G."/>
            <person name="Johnson R."/>
            <person name="Jolivet A."/>
            <person name="Jones S."/>
            <person name="Kagan R."/>
            <person name="King L.M."/>
            <person name="Leal B."/>
            <person name="Lebow H."/>
            <person name="Lee S."/>
            <person name="LeVan J.M."/>
            <person name="Lewis L.C."/>
            <person name="London P."/>
            <person name="Lorensuhewa L.M."/>
            <person name="Loulseged H."/>
            <person name="Lovett D.A."/>
            <person name="Lucier A."/>
            <person name="Lucier R.L."/>
            <person name="Ma J."/>
            <person name="Madu R.C."/>
            <person name="Mapua P."/>
            <person name="Martindale A.D."/>
            <person name="Martinez E."/>
            <person name="Massey E."/>
            <person name="Mawhiney S."/>
            <person name="Meador M.G."/>
            <person name="Mendez S."/>
            <person name="Mercado C."/>
            <person name="Mercado I.C."/>
            <person name="Merritt C.E."/>
            <person name="Miner Z.L."/>
            <person name="Minja E."/>
            <person name="Mitchell T."/>
            <person name="Mohabbat F."/>
            <person name="Mohabbat K."/>
            <person name="Montgomery B."/>
            <person name="Moore N."/>
            <person name="Morris S."/>
            <person name="Munidasa M."/>
            <person name="Ngo R.N."/>
            <person name="Nguyen N.B."/>
            <person name="Nickerson E."/>
            <person name="Nwaokelemeh O.O."/>
            <person name="Nwokenkwo S."/>
            <person name="Obregon M."/>
            <person name="Oguh M."/>
            <person name="Oragunye N."/>
            <person name="Oviedo R.J."/>
            <person name="Parish B.J."/>
            <person name="Parker D.N."/>
            <person name="Parrish J."/>
            <person name="Parks K.L."/>
            <person name="Paul H.A."/>
            <person name="Payton B.A."/>
            <person name="Perez A."/>
            <person name="Perrin W."/>
            <person name="Pickens A."/>
            <person name="Primus E.L."/>
            <person name="Pu L.-L."/>
            <person name="Puazo M."/>
            <person name="Quiles M.M."/>
            <person name="Quiroz J.B."/>
            <person name="Rabata D."/>
            <person name="Reeves K."/>
            <person name="Ruiz S.J."/>
            <person name="Shao H."/>
            <person name="Sisson I."/>
            <person name="Sonaike T."/>
            <person name="Sorelle R.P."/>
            <person name="Sutton A.E."/>
            <person name="Svatek A.F."/>
            <person name="Svetz L.A."/>
            <person name="Tamerisa K.S."/>
            <person name="Taylor T.R."/>
            <person name="Teague B."/>
            <person name="Thomas N."/>
            <person name="Thorn R.D."/>
            <person name="Trejos Z.Y."/>
            <person name="Trevino B.K."/>
            <person name="Ukegbu O.N."/>
            <person name="Urban J.B."/>
            <person name="Vasquez L.I."/>
            <person name="Vera V.A."/>
            <person name="Villasana D.M."/>
            <person name="Wang L."/>
            <person name="Ward-Moore S."/>
            <person name="Warren J.T."/>
            <person name="Wei X."/>
            <person name="White F."/>
            <person name="Williamson A.L."/>
            <person name="Wleczyk R."/>
            <person name="Wooden H.S."/>
            <person name="Wooden S.H."/>
            <person name="Yen J."/>
            <person name="Yoon L."/>
            <person name="Yoon V."/>
            <person name="Zorrilla S.E."/>
            <person name="Nelson D."/>
            <person name="Kucherlapati R."/>
            <person name="Weinstock G."/>
            <person name="Gibbs R.A."/>
        </authorList>
    </citation>
    <scope>NUCLEOTIDE SEQUENCE [LARGE SCALE GENOMIC DNA]</scope>
</reference>
<reference key="5">
    <citation type="journal article" date="2004" name="Genome Res.">
        <title>The status, quality, and expansion of the NIH full-length cDNA project: the Mammalian Gene Collection (MGC).</title>
        <authorList>
            <consortium name="The MGC Project Team"/>
        </authorList>
    </citation>
    <scope>NUCLEOTIDE SEQUENCE [LARGE SCALE MRNA] (ISOFORM 1)</scope>
    <source>
        <tissue>Muscle</tissue>
    </source>
</reference>
<reference key="6">
    <citation type="journal article" date="2004" name="J. Clin. Invest.">
        <title>CBS domains form energy-sensing modules whose binding of adenosine ligands is disrupted by disease mutations.</title>
        <authorList>
            <person name="Scott J.W."/>
            <person name="Hawley S.A."/>
            <person name="Green K.A."/>
            <person name="Anis M."/>
            <person name="Stewart G."/>
            <person name="Scullion G.A."/>
            <person name="Norman D.G."/>
            <person name="Hardie D.G."/>
        </authorList>
    </citation>
    <scope>DOMAIN CBS</scope>
    <scope>AMP-BINDING</scope>
    <scope>ATP-BINDING</scope>
</reference>
<reference key="7">
    <citation type="journal article" date="2006" name="Proc. Natl. Acad. Sci. U.S.A.">
        <title>Folliculin encoded by the BHD gene interacts with a binding protein, FNIP1, and AMPK, and is involved in AMPK and mTOR signaling.</title>
        <authorList>
            <person name="Baba M."/>
            <person name="Hong S.-B."/>
            <person name="Sharma N."/>
            <person name="Warren M.B."/>
            <person name="Nickerson M.L."/>
            <person name="Iwamatsu A."/>
            <person name="Esposito D."/>
            <person name="Gillette W.K."/>
            <person name="Hopkins R.F. III"/>
            <person name="Hartley J.L."/>
            <person name="Furihata M."/>
            <person name="Oishi S."/>
            <person name="Zhen W."/>
            <person name="Burke T.R. Jr."/>
            <person name="Linehan W.M."/>
            <person name="Schmidt L.S."/>
            <person name="Zbar B."/>
        </authorList>
    </citation>
    <scope>INTERACTION WITH FNIP1</scope>
    <scope>IDENTIFICATION BY MASS SPECTROMETRY</scope>
</reference>
<reference key="8">
    <citation type="journal article" date="2007" name="EMBO J.">
        <title>Regulation of AMP-activated protein kinase by a pseudosubstrate sequence on the gamma subunit.</title>
        <authorList>
            <person name="Scott J.W."/>
            <person name="Ross F.A."/>
            <person name="Liu J.K."/>
            <person name="Hardie D.G."/>
        </authorList>
    </citation>
    <scope>DOMAIN AMPK PSEUDOSUBSTRATE</scope>
</reference>
<reference key="9">
    <citation type="journal article" date="2008" name="Gene">
        <title>Identification and characterization of a novel folliculin-interacting protein FNIP2.</title>
        <authorList>
            <person name="Hasumi H."/>
            <person name="Baba M."/>
            <person name="Hong S.-B."/>
            <person name="Hasumi Y."/>
            <person name="Huang Y."/>
            <person name="Yao M."/>
            <person name="Valera V.A."/>
            <person name="Linehan W.M."/>
            <person name="Schmidt L.S."/>
        </authorList>
    </citation>
    <scope>INTERACTION WITH FNIP2</scope>
</reference>
<reference key="10">
    <citation type="journal article" date="2008" name="Mol. Cell">
        <title>Kinase-selective enrichment enables quantitative phosphoproteomics of the kinome across the cell cycle.</title>
        <authorList>
            <person name="Daub H."/>
            <person name="Olsen J.V."/>
            <person name="Bairlein M."/>
            <person name="Gnad F."/>
            <person name="Oppermann F.S."/>
            <person name="Korner R."/>
            <person name="Greff Z."/>
            <person name="Keri G."/>
            <person name="Stemmann O."/>
            <person name="Mann M."/>
        </authorList>
    </citation>
    <scope>IDENTIFICATION BY MASS SPECTROMETRY [LARGE SCALE ANALYSIS]</scope>
    <source>
        <tissue>Cervix carcinoma</tissue>
    </source>
</reference>
<reference key="11">
    <citation type="journal article" date="2011" name="Autophagy">
        <title>Ulk1-mediated phosphorylation of AMPK constitutes a negative regulatory feedback loop.</title>
        <authorList>
            <person name="Loffler A.S."/>
            <person name="Alers S."/>
            <person name="Dieterle A.M."/>
            <person name="Keppeler H."/>
            <person name="Franz-Wachtel M."/>
            <person name="Kundu M."/>
            <person name="Campbell D.G."/>
            <person name="Wesselborg S."/>
            <person name="Alessi D.R."/>
            <person name="Stork B."/>
        </authorList>
    </citation>
    <scope>PHOSPHORYLATION BY ULK1 AND ULK2</scope>
</reference>
<reference key="12">
    <citation type="journal article" date="2011" name="BMC Syst. Biol.">
        <title>Initial characterization of the human central proteome.</title>
        <authorList>
            <person name="Burkard T.R."/>
            <person name="Planyavsky M."/>
            <person name="Kaupe I."/>
            <person name="Breitwieser F.P."/>
            <person name="Buerckstuemmer T."/>
            <person name="Bennett K.L."/>
            <person name="Superti-Furga G."/>
            <person name="Colinge J."/>
        </authorList>
    </citation>
    <scope>IDENTIFICATION BY MASS SPECTROMETRY [LARGE SCALE ANALYSIS]</scope>
</reference>
<reference key="13">
    <citation type="journal article" date="2011" name="Science">
        <title>AMPK is a direct adenylate charge-regulated protein kinase.</title>
        <authorList>
            <person name="Oakhill J.S."/>
            <person name="Steel R."/>
            <person name="Chen Z.P."/>
            <person name="Scott J.W."/>
            <person name="Ling N."/>
            <person name="Tam S."/>
            <person name="Kemp B.E."/>
        </authorList>
    </citation>
    <scope>INTERACTION WITH PRKAA1 AND PRKAB1</scope>
    <scope>DOMAIN CBS</scope>
    <scope>ADP-BINDING</scope>
    <scope>MUTAGENESIS OF ASP-90; ASP-245 AND ASP-317</scope>
    <scope>FUNCTION</scope>
</reference>
<reference key="14">
    <citation type="journal article" date="2014" name="J. Biol. Chem.">
        <title>Cross-talk between two essential nutrient-sensitive enzymes: O-GlcNAc transferase (OGT) and AMP-activated protein kinase (AMPK).</title>
        <authorList>
            <person name="Bullen J.W."/>
            <person name="Balsbaugh J.L."/>
            <person name="Chanda D."/>
            <person name="Shabanowitz J."/>
            <person name="Hunt D.F."/>
            <person name="Neumann D."/>
            <person name="Hart G.W."/>
        </authorList>
    </citation>
    <scope>FUNCTION</scope>
    <scope>GLYCOSYLATION</scope>
</reference>
<reference key="15">
    <citation type="journal article" date="2007" name="Circ. Res.">
        <title>AMP-activated protein kinase in metabolic control and insulin signaling.</title>
        <authorList>
            <person name="Towler M.C."/>
            <person name="Hardie D.G."/>
        </authorList>
    </citation>
    <scope>REVIEW ON FUNCTION</scope>
</reference>
<reference key="16">
    <citation type="journal article" date="2007" name="Nat. Rev. Mol. Cell Biol.">
        <title>AMP-activated/SNF1 protein kinases: conserved guardians of cellular energy.</title>
        <authorList>
            <person name="Hardie D.G."/>
        </authorList>
    </citation>
    <scope>REVIEW ON FUNCTION</scope>
</reference>
<reference key="17">
    <citation type="journal article" date="2014" name="J. Proteomics">
        <title>An enzyme assisted RP-RPLC approach for in-depth analysis of human liver phosphoproteome.</title>
        <authorList>
            <person name="Bian Y."/>
            <person name="Song C."/>
            <person name="Cheng K."/>
            <person name="Dong M."/>
            <person name="Wang F."/>
            <person name="Huang J."/>
            <person name="Sun D."/>
            <person name="Wang L."/>
            <person name="Ye M."/>
            <person name="Zou H."/>
        </authorList>
    </citation>
    <scope>IDENTIFICATION BY MASS SPECTROMETRY [LARGE SCALE ANALYSIS]</scope>
    <source>
        <tissue>Liver</tissue>
    </source>
</reference>
<reference evidence="14 15 16 17" key="18">
    <citation type="journal article" date="2007" name="Acta Crystallogr. D">
        <title>Structure of a CBS-domain pair from the regulatory gamma1 subunit of human AMPK in complex with AMP and ZMP.</title>
        <authorList>
            <person name="Day P."/>
            <person name="Sharff A."/>
            <person name="Parra L."/>
            <person name="Cleasby A."/>
            <person name="Williams M."/>
            <person name="Hoerer S."/>
            <person name="Nar H."/>
            <person name="Redemann N."/>
            <person name="Tickle I."/>
            <person name="Yon J."/>
        </authorList>
    </citation>
    <scope>X-RAY CRYSTALLOGRAPHY (1.33 ANGSTROMS) OF 182-325 IN COMPLEX WITH AMP</scope>
</reference>
<reference evidence="18 19" key="19">
    <citation type="journal article" date="2013" name="Nat. Commun.">
        <title>Structural basis of AMPK regulation by small molecule activators.</title>
        <authorList>
            <person name="Xiao B."/>
            <person name="Sanders M.J."/>
            <person name="Carmena D."/>
            <person name="Bright N.J."/>
            <person name="Haire L.F."/>
            <person name="Underwood E."/>
            <person name="Patel B.R."/>
            <person name="Heath R.B."/>
            <person name="Walker P.A."/>
            <person name="Hallen S."/>
            <person name="Giordanetto F."/>
            <person name="Martin S.R."/>
            <person name="Carling D."/>
            <person name="Gamblin S.J."/>
        </authorList>
    </citation>
    <scope>X-RAY CRYSTALLOGRAPHY (3.02 ANGSTROMS) IN COMPLEX WITH AMP</scope>
</reference>
<reference evidence="20 21" key="20">
    <citation type="journal article" date="2015" name="Cell Res.">
        <title>Structural basis of AMPK regulation by adenine nucleotides and glycogen.</title>
        <authorList>
            <person name="Li X."/>
            <person name="Wang L."/>
            <person name="Zhou X.E."/>
            <person name="Ke J."/>
            <person name="de Waal P.W."/>
            <person name="Gu X."/>
            <person name="Tan M.H."/>
            <person name="Wang D."/>
            <person name="Wu D."/>
            <person name="Xu H.E."/>
            <person name="Melcher K."/>
        </authorList>
    </citation>
    <scope>X-RAY CRYSTALLOGRAPHY (4.05 ANGSTROMS) OF 24-327 IN COMPLEX WITH AMP</scope>
</reference>
<reference evidence="22 23" key="21">
    <citation type="journal article" date="2016" name="Nat. Commun.">
        <title>Structural basis of allosteric and synergistic activation of AMPK by furan-2-phosphonic derivative C2 binding.</title>
        <authorList>
            <person name="Langendorf C.G."/>
            <person name="Ngoei K.R."/>
            <person name="Scott J.W."/>
            <person name="Ling N.X."/>
            <person name="Issa S.M."/>
            <person name="Gorman M.A."/>
            <person name="Parker M.W."/>
            <person name="Sakamoto K."/>
            <person name="Oakhill J.S."/>
            <person name="Kemp B.E."/>
        </authorList>
    </citation>
    <scope>X-RAY CRYSTALLOGRAPHY (2.99 ANGSTROMS) OF 2-331 IN COMPLEX WITH AMP</scope>
</reference>
<sequence>METVISSDSSPAVENEHPQETPESNNSVYTSFMKSHRCYDLIPTSSKLVVFDTSLQVKKAFFALVTNGVRAAPLWDSKKQSFVGMLTITDFINILHRYYKSALVQIYELEEHKIETWREVYLQDSFKPLVCISPNASLFDAVSSLIRNKIHRLPVIDPESGNTLYILTHKRILKFLKLFITEFPKPEFMSKSLEELQIGTYANIAMVRTTTPVYVALGIFVQHRVSALPVVDEKGRVVDIYSKFDVINLAAEKTYNNLDVSVTKALQHRSHYFEGVLKCYLHETLETIINRLVEAEVHRLVVVDENDVVKGIVSLSDILQALVLTGGEKKP</sequence>
<protein>
    <recommendedName>
        <fullName>5'-AMP-activated protein kinase subunit gamma-1</fullName>
        <shortName>AMPK gamma1</shortName>
        <shortName>AMPK subunit gamma-1</shortName>
        <shortName>AMPKg</shortName>
    </recommendedName>
</protein>
<feature type="chain" id="PRO_0000204377" description="5'-AMP-activated protein kinase subunit gamma-1">
    <location>
        <begin position="1"/>
        <end position="331"/>
    </location>
</feature>
<feature type="domain" description="CBS 1" evidence="2">
    <location>
        <begin position="43"/>
        <end position="103"/>
    </location>
</feature>
<feature type="domain" description="CBS 2" evidence="2">
    <location>
        <begin position="125"/>
        <end position="187"/>
    </location>
</feature>
<feature type="domain" description="CBS 3" evidence="2">
    <location>
        <begin position="198"/>
        <end position="260"/>
    </location>
</feature>
<feature type="domain" description="CBS 4" evidence="2">
    <location>
        <begin position="272"/>
        <end position="329"/>
    </location>
</feature>
<feature type="region of interest" description="Disordered" evidence="3">
    <location>
        <begin position="1"/>
        <end position="26"/>
    </location>
</feature>
<feature type="short sequence motif" description="AMPK pseudosubstrate">
    <location>
        <begin position="138"/>
        <end position="159"/>
    </location>
</feature>
<feature type="compositionally biased region" description="Polar residues" evidence="3">
    <location>
        <begin position="1"/>
        <end position="12"/>
    </location>
</feature>
<feature type="binding site" evidence="1">
    <location>
        <position position="70"/>
    </location>
    <ligand>
        <name>ADP</name>
        <dbReference type="ChEBI" id="CHEBI:456216"/>
        <label>2</label>
    </ligand>
</feature>
<feature type="binding site" evidence="9 11 19">
    <location>
        <position position="70"/>
    </location>
    <ligand>
        <name>AMP</name>
        <dbReference type="ChEBI" id="CHEBI:456215"/>
        <label>2</label>
    </ligand>
</feature>
<feature type="binding site" evidence="1">
    <location>
        <position position="70"/>
    </location>
    <ligand>
        <name>ATP</name>
        <dbReference type="ChEBI" id="CHEBI:30616"/>
        <label>1</label>
    </ligand>
</feature>
<feature type="binding site" evidence="1">
    <location>
        <position position="70"/>
    </location>
    <ligand>
        <name>ATP</name>
        <dbReference type="ChEBI" id="CHEBI:30616"/>
        <label>2</label>
    </ligand>
</feature>
<feature type="binding site" evidence="1">
    <location>
        <begin position="85"/>
        <end position="90"/>
    </location>
    <ligand>
        <name>ADP</name>
        <dbReference type="ChEBI" id="CHEBI:456216"/>
        <label>1</label>
    </ligand>
</feature>
<feature type="binding site" evidence="9 11 18">
    <location>
        <begin position="85"/>
        <end position="90"/>
    </location>
    <ligand>
        <name>AMP</name>
        <dbReference type="ChEBI" id="CHEBI:456215"/>
        <label>1</label>
    </ligand>
</feature>
<feature type="binding site" evidence="1">
    <location>
        <begin position="85"/>
        <end position="90"/>
    </location>
    <ligand>
        <name>ATP</name>
        <dbReference type="ChEBI" id="CHEBI:30616"/>
        <label>1</label>
    </ligand>
</feature>
<feature type="binding site" evidence="1">
    <location>
        <position position="130"/>
    </location>
    <ligand>
        <name>ADP</name>
        <dbReference type="ChEBI" id="CHEBI:456216"/>
        <label>1</label>
    </ligand>
</feature>
<feature type="binding site" evidence="9 11 18">
    <location>
        <position position="130"/>
    </location>
    <ligand>
        <name>AMP</name>
        <dbReference type="ChEBI" id="CHEBI:456215"/>
        <label>1</label>
    </ligand>
</feature>
<feature type="binding site" evidence="1">
    <location>
        <position position="130"/>
    </location>
    <ligand>
        <name>ATP</name>
        <dbReference type="ChEBI" id="CHEBI:30616"/>
        <label>1</label>
    </ligand>
</feature>
<feature type="binding site" evidence="1">
    <location>
        <begin position="151"/>
        <end position="152"/>
    </location>
    <ligand>
        <name>ADP</name>
        <dbReference type="ChEBI" id="CHEBI:456216"/>
        <label>1</label>
    </ligand>
</feature>
<feature type="binding site" evidence="9 11 18">
    <location>
        <begin position="151"/>
        <end position="152"/>
    </location>
    <ligand>
        <name>AMP</name>
        <dbReference type="ChEBI" id="CHEBI:456215"/>
        <label>1</label>
    </ligand>
</feature>
<feature type="binding site" evidence="1">
    <location>
        <begin position="151"/>
        <end position="152"/>
    </location>
    <ligand>
        <name>ATP</name>
        <dbReference type="ChEBI" id="CHEBI:30616"/>
        <label>1</label>
    </ligand>
</feature>
<feature type="binding site" evidence="5 9 11 19">
    <location>
        <position position="151"/>
    </location>
    <ligand>
        <name>AMP</name>
        <dbReference type="ChEBI" id="CHEBI:456215"/>
        <label>3</label>
    </ligand>
</feature>
<feature type="binding site" evidence="1">
    <location>
        <position position="152"/>
    </location>
    <ligand>
        <name>ATP</name>
        <dbReference type="ChEBI" id="CHEBI:30616"/>
        <label>2</label>
    </ligand>
</feature>
<feature type="binding site" evidence="1">
    <location>
        <position position="170"/>
    </location>
    <ligand>
        <name>ADP</name>
        <dbReference type="ChEBI" id="CHEBI:456216"/>
        <label>2</label>
    </ligand>
</feature>
<feature type="binding site" evidence="9 11 19">
    <location>
        <position position="170"/>
    </location>
    <ligand>
        <name>AMP</name>
        <dbReference type="ChEBI" id="CHEBI:456215"/>
        <label>2</label>
    </ligand>
</feature>
<feature type="binding site" evidence="1">
    <location>
        <position position="170"/>
    </location>
    <ligand>
        <name>ATP</name>
        <dbReference type="ChEBI" id="CHEBI:30616"/>
        <label>2</label>
    </ligand>
</feature>
<feature type="binding site" evidence="5 9 11 19">
    <location>
        <position position="200"/>
    </location>
    <ligand>
        <name>AMP</name>
        <dbReference type="ChEBI" id="CHEBI:456215"/>
        <label>3</label>
    </ligand>
</feature>
<feature type="binding site" evidence="5 9 11 19">
    <location>
        <position position="205"/>
    </location>
    <ligand>
        <name>AMP</name>
        <dbReference type="ChEBI" id="CHEBI:456215"/>
        <label>3</label>
    </ligand>
</feature>
<feature type="binding site" evidence="5 9 11 19">
    <location>
        <begin position="226"/>
        <end position="227"/>
    </location>
    <ligand>
        <name>AMP</name>
        <dbReference type="ChEBI" id="CHEBI:456215"/>
        <label>3</label>
    </ligand>
</feature>
<feature type="binding site" evidence="1">
    <location>
        <begin position="242"/>
        <end position="245"/>
    </location>
    <ligand>
        <name>ADP</name>
        <dbReference type="ChEBI" id="CHEBI:456216"/>
        <label>2</label>
    </ligand>
</feature>
<feature type="binding site" evidence="9 11 19">
    <location>
        <begin position="242"/>
        <end position="245"/>
    </location>
    <ligand>
        <name>AMP</name>
        <dbReference type="ChEBI" id="CHEBI:456215"/>
        <label>2</label>
    </ligand>
</feature>
<feature type="binding site" evidence="1">
    <location>
        <begin position="242"/>
        <end position="245"/>
    </location>
    <ligand>
        <name>ATP</name>
        <dbReference type="ChEBI" id="CHEBI:30616"/>
        <label>2</label>
    </ligand>
</feature>
<feature type="binding site" evidence="1">
    <location>
        <position position="269"/>
    </location>
    <ligand>
        <name>ADP</name>
        <dbReference type="ChEBI" id="CHEBI:456216"/>
        <label>2</label>
    </ligand>
</feature>
<feature type="binding site" evidence="9 11 19">
    <location>
        <position position="269"/>
    </location>
    <ligand>
        <name>AMP</name>
        <dbReference type="ChEBI" id="CHEBI:456215"/>
        <label>2</label>
    </ligand>
</feature>
<feature type="binding site" evidence="1">
    <location>
        <position position="269"/>
    </location>
    <ligand>
        <name>ATP</name>
        <dbReference type="ChEBI" id="CHEBI:30616"/>
        <label>2</label>
    </ligand>
</feature>
<feature type="binding site" evidence="1">
    <location>
        <position position="277"/>
    </location>
    <ligand>
        <name>ADP</name>
        <dbReference type="ChEBI" id="CHEBI:456216"/>
        <label>2</label>
    </ligand>
</feature>
<feature type="binding site" evidence="9 11 19">
    <location>
        <position position="277"/>
    </location>
    <ligand>
        <name>AMP</name>
        <dbReference type="ChEBI" id="CHEBI:456215"/>
        <label>2</label>
    </ligand>
</feature>
<feature type="binding site" evidence="1">
    <location>
        <position position="277"/>
    </location>
    <ligand>
        <name>ATP</name>
        <dbReference type="ChEBI" id="CHEBI:30616"/>
        <label>2</label>
    </ligand>
</feature>
<feature type="binding site" evidence="1">
    <location>
        <begin position="298"/>
        <end position="299"/>
    </location>
    <ligand>
        <name>ADP</name>
        <dbReference type="ChEBI" id="CHEBI:456216"/>
        <label>2</label>
    </ligand>
</feature>
<feature type="binding site" evidence="9 11 19">
    <location>
        <begin position="298"/>
        <end position="299"/>
    </location>
    <ligand>
        <name>AMP</name>
        <dbReference type="ChEBI" id="CHEBI:456215"/>
        <label>2</label>
    </ligand>
</feature>
<feature type="binding site" evidence="1">
    <location>
        <begin position="298"/>
        <end position="299"/>
    </location>
    <ligand>
        <name>ATP</name>
        <dbReference type="ChEBI" id="CHEBI:30616"/>
        <label>2</label>
    </ligand>
</feature>
<feature type="binding site" evidence="5 9 11 19">
    <location>
        <position position="298"/>
    </location>
    <ligand>
        <name>AMP</name>
        <dbReference type="ChEBI" id="CHEBI:456215"/>
        <label>3</label>
    </ligand>
</feature>
<feature type="binding site" evidence="5 9 11 19">
    <location>
        <begin position="314"/>
        <end position="317"/>
    </location>
    <ligand>
        <name>AMP</name>
        <dbReference type="ChEBI" id="CHEBI:456215"/>
        <label>3</label>
    </ligand>
</feature>
<feature type="modified residue" description="Phosphoserine; by ULK1" evidence="1">
    <location>
        <position position="261"/>
    </location>
</feature>
<feature type="modified residue" description="Phosphothreonine; by ULK1" evidence="1">
    <location>
        <position position="263"/>
    </location>
</feature>
<feature type="modified residue" description="Phosphoserine; by ULK1" evidence="1">
    <location>
        <position position="270"/>
    </location>
</feature>
<feature type="splice variant" id="VSP_046711" description="In isoform 2." evidence="12">
    <location>
        <begin position="1"/>
        <end position="32"/>
    </location>
</feature>
<feature type="splice variant" id="VSP_046712" description="In isoform 3." evidence="12">
    <original>V</original>
    <variation>VVLRALSCPL</variation>
    <location>
        <position position="83"/>
    </location>
</feature>
<feature type="sequence variant" id="VAR_033453" description="In dbSNP:rs1126930.">
    <original>T</original>
    <variation>S</variation>
    <location>
        <position position="89"/>
    </location>
</feature>
<feature type="sequence variant" id="VAR_033454" description="In dbSNP:rs34210356.">
    <original>K</original>
    <variation>N</variation>
    <location>
        <position position="329"/>
    </location>
</feature>
<feature type="mutagenesis site" description="Reduced AMP-activation of phosphorylation of PRKAA1 or PRKAA2. Reduced ADP activation of phosphorylation of PRKAA1 or PRKAA2." evidence="8">
    <original>D</original>
    <variation>A</variation>
    <location>
        <position position="90"/>
    </location>
</feature>
<feature type="mutagenesis site" description="Reduced AMP-activation of phosphorylation of PRKAA1 or PRKAA2. Reduced ADP activation of phosphorylation of PRKAA1 or PRKAA2." evidence="8">
    <original>D</original>
    <variation>A</variation>
    <location>
        <position position="245"/>
    </location>
</feature>
<feature type="mutagenesis site" description="Reduced AMP-activation of phosphorylation of PRKAA1 or PRKAA2. Does not affect ADP activation of phosphorylation of PRKAA1 or PRKAA2." evidence="8">
    <original>D</original>
    <variation>A</variation>
    <location>
        <position position="317"/>
    </location>
</feature>
<feature type="helix" evidence="29">
    <location>
        <begin position="28"/>
        <end position="35"/>
    </location>
</feature>
<feature type="helix" evidence="29">
    <location>
        <begin position="38"/>
        <end position="41"/>
    </location>
</feature>
<feature type="strand" evidence="29">
    <location>
        <begin position="44"/>
        <end position="52"/>
    </location>
</feature>
<feature type="helix" evidence="29">
    <location>
        <begin position="57"/>
        <end position="66"/>
    </location>
</feature>
<feature type="strand" evidence="29">
    <location>
        <begin position="72"/>
        <end position="76"/>
    </location>
</feature>
<feature type="turn" evidence="29">
    <location>
        <begin position="77"/>
        <end position="80"/>
    </location>
</feature>
<feature type="strand" evidence="29">
    <location>
        <begin position="81"/>
        <end position="86"/>
    </location>
</feature>
<feature type="helix" evidence="29">
    <location>
        <begin position="88"/>
        <end position="98"/>
    </location>
</feature>
<feature type="strand" evidence="26">
    <location>
        <begin position="102"/>
        <end position="104"/>
    </location>
</feature>
<feature type="helix" evidence="29">
    <location>
        <begin position="107"/>
        <end position="111"/>
    </location>
</feature>
<feature type="helix" evidence="29">
    <location>
        <begin position="114"/>
        <end position="121"/>
    </location>
</feature>
<feature type="strand" evidence="29">
    <location>
        <begin position="123"/>
        <end position="125"/>
    </location>
</feature>
<feature type="strand" evidence="28">
    <location>
        <begin position="134"/>
        <end position="137"/>
    </location>
</feature>
<feature type="helix" evidence="29">
    <location>
        <begin position="138"/>
        <end position="147"/>
    </location>
</feature>
<feature type="strand" evidence="29">
    <location>
        <begin position="153"/>
        <end position="156"/>
    </location>
</feature>
<feature type="turn" evidence="29">
    <location>
        <begin position="158"/>
        <end position="160"/>
    </location>
</feature>
<feature type="strand" evidence="29">
    <location>
        <begin position="163"/>
        <end position="167"/>
    </location>
</feature>
<feature type="helix" evidence="29">
    <location>
        <begin position="169"/>
        <end position="178"/>
    </location>
</feature>
<feature type="helix" evidence="29">
    <location>
        <begin position="179"/>
        <end position="182"/>
    </location>
</feature>
<feature type="helix" evidence="24">
    <location>
        <begin position="186"/>
        <end position="189"/>
    </location>
</feature>
<feature type="strand" evidence="26">
    <location>
        <begin position="190"/>
        <end position="192"/>
    </location>
</feature>
<feature type="helix" evidence="24">
    <location>
        <begin position="193"/>
        <end position="196"/>
    </location>
</feature>
<feature type="strand" evidence="27">
    <location>
        <begin position="207"/>
        <end position="210"/>
    </location>
</feature>
<feature type="helix" evidence="24">
    <location>
        <begin position="213"/>
        <end position="223"/>
    </location>
</feature>
<feature type="strand" evidence="24">
    <location>
        <begin position="226"/>
        <end position="231"/>
    </location>
</feature>
<feature type="strand" evidence="24">
    <location>
        <begin position="235"/>
        <end position="242"/>
    </location>
</feature>
<feature type="helix" evidence="24">
    <location>
        <begin position="243"/>
        <end position="251"/>
    </location>
</feature>
<feature type="strand" evidence="25">
    <location>
        <begin position="259"/>
        <end position="261"/>
    </location>
</feature>
<feature type="helix" evidence="24">
    <location>
        <begin position="262"/>
        <end position="267"/>
    </location>
</feature>
<feature type="helix" evidence="24">
    <location>
        <begin position="271"/>
        <end position="274"/>
    </location>
</feature>
<feature type="strand" evidence="24">
    <location>
        <begin position="277"/>
        <end position="279"/>
    </location>
</feature>
<feature type="helix" evidence="24">
    <location>
        <begin position="285"/>
        <end position="295"/>
    </location>
</feature>
<feature type="strand" evidence="24">
    <location>
        <begin position="298"/>
        <end position="303"/>
    </location>
</feature>
<feature type="strand" evidence="24">
    <location>
        <begin position="307"/>
        <end position="314"/>
    </location>
</feature>
<feature type="helix" evidence="24">
    <location>
        <begin position="315"/>
        <end position="322"/>
    </location>
</feature>
<feature type="turn" evidence="25">
    <location>
        <begin position="323"/>
        <end position="325"/>
    </location>
</feature>
<accession>P54619</accession>
<accession>B4DDT7</accession>
<accession>Q8N7V9</accession>
<dbReference type="EMBL" id="U42412">
    <property type="protein sequence ID" value="AAC50495.1"/>
    <property type="molecule type" value="mRNA"/>
</dbReference>
<dbReference type="EMBL" id="BT007345">
    <property type="protein sequence ID" value="AAP36009.1"/>
    <property type="molecule type" value="mRNA"/>
</dbReference>
<dbReference type="EMBL" id="AK097606">
    <property type="protein sequence ID" value="BAC05117.1"/>
    <property type="molecule type" value="mRNA"/>
</dbReference>
<dbReference type="EMBL" id="AK293332">
    <property type="protein sequence ID" value="BAG56848.1"/>
    <property type="molecule type" value="mRNA"/>
</dbReference>
<dbReference type="EMBL" id="AC011603">
    <property type="status" value="NOT_ANNOTATED_CDS"/>
    <property type="molecule type" value="Genomic_DNA"/>
</dbReference>
<dbReference type="EMBL" id="BC000358">
    <property type="protein sequence ID" value="AAH00358.1"/>
    <property type="molecule type" value="mRNA"/>
</dbReference>
<dbReference type="CCDS" id="CCDS55824.1">
    <molecule id="P54619-2"/>
</dbReference>
<dbReference type="CCDS" id="CCDS55825.1">
    <molecule id="P54619-3"/>
</dbReference>
<dbReference type="CCDS" id="CCDS8777.1">
    <molecule id="P54619-1"/>
</dbReference>
<dbReference type="RefSeq" id="NP_001193638.1">
    <molecule id="P54619-3"/>
    <property type="nucleotide sequence ID" value="NM_001206709.2"/>
</dbReference>
<dbReference type="RefSeq" id="NP_001193639.1">
    <molecule id="P54619-2"/>
    <property type="nucleotide sequence ID" value="NM_001206710.2"/>
</dbReference>
<dbReference type="RefSeq" id="NP_002724.1">
    <molecule id="P54619-1"/>
    <property type="nucleotide sequence ID" value="NM_002733.5"/>
</dbReference>
<dbReference type="RefSeq" id="XP_006719562.1">
    <property type="nucleotide sequence ID" value="XM_006719499.2"/>
</dbReference>
<dbReference type="RefSeq" id="XP_011536864.1">
    <molecule id="P54619-2"/>
    <property type="nucleotide sequence ID" value="XM_011538562.3"/>
</dbReference>
<dbReference type="RefSeq" id="XP_054228501.1">
    <molecule id="P54619-2"/>
    <property type="nucleotide sequence ID" value="XM_054372526.1"/>
</dbReference>
<dbReference type="PDB" id="2UV4">
    <property type="method" value="X-ray"/>
    <property type="resolution" value="1.33 A"/>
    <property type="chains" value="A=182-325"/>
</dbReference>
<dbReference type="PDB" id="2UV5">
    <property type="method" value="X-ray"/>
    <property type="resolution" value="1.69 A"/>
    <property type="chains" value="A=182-325"/>
</dbReference>
<dbReference type="PDB" id="2UV6">
    <property type="method" value="X-ray"/>
    <property type="resolution" value="2.00 A"/>
    <property type="chains" value="A=182-325"/>
</dbReference>
<dbReference type="PDB" id="2UV7">
    <property type="method" value="X-ray"/>
    <property type="resolution" value="2.00 A"/>
    <property type="chains" value="A=182-325"/>
</dbReference>
<dbReference type="PDB" id="4CFE">
    <property type="method" value="X-ray"/>
    <property type="resolution" value="3.02 A"/>
    <property type="chains" value="E/F=1-331"/>
</dbReference>
<dbReference type="PDB" id="4CFF">
    <property type="method" value="X-ray"/>
    <property type="resolution" value="3.92 A"/>
    <property type="chains" value="E/F=1-331"/>
</dbReference>
<dbReference type="PDB" id="4RER">
    <property type="method" value="X-ray"/>
    <property type="resolution" value="4.05 A"/>
    <property type="chains" value="G=24-327"/>
</dbReference>
<dbReference type="PDB" id="4REW">
    <property type="method" value="X-ray"/>
    <property type="resolution" value="4.58 A"/>
    <property type="chains" value="G=24-327"/>
</dbReference>
<dbReference type="PDB" id="4ZHX">
    <property type="method" value="X-ray"/>
    <property type="resolution" value="2.99 A"/>
    <property type="chains" value="E/F=2-331"/>
</dbReference>
<dbReference type="PDB" id="5EZV">
    <property type="method" value="X-ray"/>
    <property type="resolution" value="2.99 A"/>
    <property type="chains" value="E/F=2-331"/>
</dbReference>
<dbReference type="PDB" id="5ISO">
    <property type="method" value="X-ray"/>
    <property type="resolution" value="2.63 A"/>
    <property type="chains" value="E/F=1-331"/>
</dbReference>
<dbReference type="PDB" id="6B1U">
    <property type="method" value="X-ray"/>
    <property type="resolution" value="2.77 A"/>
    <property type="chains" value="E/F=2-331"/>
</dbReference>
<dbReference type="PDB" id="6B2E">
    <property type="method" value="X-ray"/>
    <property type="resolution" value="3.80 A"/>
    <property type="chains" value="C=2-331"/>
</dbReference>
<dbReference type="PDB" id="6C9F">
    <property type="method" value="X-ray"/>
    <property type="resolution" value="2.92 A"/>
    <property type="chains" value="C=1-331"/>
</dbReference>
<dbReference type="PDB" id="6C9G">
    <property type="method" value="X-ray"/>
    <property type="resolution" value="2.70 A"/>
    <property type="chains" value="C=1-331"/>
</dbReference>
<dbReference type="PDB" id="6C9H">
    <property type="method" value="X-ray"/>
    <property type="resolution" value="2.65 A"/>
    <property type="chains" value="C=1-331"/>
</dbReference>
<dbReference type="PDB" id="6C9J">
    <property type="method" value="X-ray"/>
    <property type="resolution" value="3.05 A"/>
    <property type="chains" value="C=1-325"/>
</dbReference>
<dbReference type="PDB" id="7JHG">
    <property type="method" value="EM"/>
    <property type="resolution" value="3.47 A"/>
    <property type="chains" value="G=24-327"/>
</dbReference>
<dbReference type="PDB" id="7JHH">
    <property type="method" value="EM"/>
    <property type="resolution" value="3.92 A"/>
    <property type="chains" value="G=24-327"/>
</dbReference>
<dbReference type="PDB" id="7JIJ">
    <property type="method" value="X-ray"/>
    <property type="resolution" value="5.50 A"/>
    <property type="chains" value="G=24-327"/>
</dbReference>
<dbReference type="PDB" id="7M74">
    <property type="method" value="EM"/>
    <property type="resolution" value="3.93 A"/>
    <property type="chains" value="G=24-327"/>
</dbReference>
<dbReference type="PDB" id="7MYJ">
    <property type="method" value="X-ray"/>
    <property type="resolution" value="2.95 A"/>
    <property type="chains" value="E/F=2-331"/>
</dbReference>
<dbReference type="PDB" id="8BIK">
    <property type="method" value="X-ray"/>
    <property type="resolution" value="2.50 A"/>
    <property type="chains" value="C/F=1-331"/>
</dbReference>
<dbReference type="PDBsum" id="2UV4"/>
<dbReference type="PDBsum" id="2UV5"/>
<dbReference type="PDBsum" id="2UV6"/>
<dbReference type="PDBsum" id="2UV7"/>
<dbReference type="PDBsum" id="4CFE"/>
<dbReference type="PDBsum" id="4CFF"/>
<dbReference type="PDBsum" id="4RER"/>
<dbReference type="PDBsum" id="4REW"/>
<dbReference type="PDBsum" id="4ZHX"/>
<dbReference type="PDBsum" id="5EZV"/>
<dbReference type="PDBsum" id="5ISO"/>
<dbReference type="PDBsum" id="6B1U"/>
<dbReference type="PDBsum" id="6B2E"/>
<dbReference type="PDBsum" id="6C9F"/>
<dbReference type="PDBsum" id="6C9G"/>
<dbReference type="PDBsum" id="6C9H"/>
<dbReference type="PDBsum" id="6C9J"/>
<dbReference type="PDBsum" id="7JHG"/>
<dbReference type="PDBsum" id="7JHH"/>
<dbReference type="PDBsum" id="7JIJ"/>
<dbReference type="PDBsum" id="7M74"/>
<dbReference type="PDBsum" id="7MYJ"/>
<dbReference type="PDBsum" id="8BIK"/>
<dbReference type="EMDB" id="EMD-22336"/>
<dbReference type="EMDB" id="EMD-22337"/>
<dbReference type="EMDB" id="EMD-23708"/>
<dbReference type="SMR" id="P54619"/>
<dbReference type="BioGRID" id="111558">
    <property type="interactions" value="160"/>
</dbReference>
<dbReference type="ComplexPortal" id="CPX-5633">
    <property type="entry name" value="AMPK complex, alpha1-beta1-gamma1 variant"/>
</dbReference>
<dbReference type="ComplexPortal" id="CPX-5787">
    <property type="entry name" value="AMPK complex, alpha2-beta1-gamma1 variant"/>
</dbReference>
<dbReference type="ComplexPortal" id="CPX-5790">
    <property type="entry name" value="AMPK complex, alpha2-beta2-gamma1 variant"/>
</dbReference>
<dbReference type="ComplexPortal" id="CPX-5791">
    <property type="entry name" value="AMPK complex, alpha1-beta2-gamma1 variant"/>
</dbReference>
<dbReference type="CORUM" id="P54619"/>
<dbReference type="DIP" id="DIP-39974N"/>
<dbReference type="FunCoup" id="P54619">
    <property type="interactions" value="2551"/>
</dbReference>
<dbReference type="IntAct" id="P54619">
    <property type="interactions" value="95"/>
</dbReference>
<dbReference type="MINT" id="P54619"/>
<dbReference type="STRING" id="9606.ENSP00000323867"/>
<dbReference type="BindingDB" id="P54619"/>
<dbReference type="ChEMBL" id="CHEMBL2393"/>
<dbReference type="DrugBank" id="DB08039">
    <property type="generic name" value="(3Z)-N,N-DIMETHYL-2-OXO-3-(4,5,6,7-TETRAHYDRO-1H-INDOL-2-YLMETHYLIDENE)-2,3-DIHYDRO-1H-INDOLE-5-SULFONAMIDE"/>
</dbReference>
<dbReference type="DrugBank" id="DB04944">
    <property type="generic name" value="Acadesine"/>
</dbReference>
<dbReference type="DrugBank" id="DB00945">
    <property type="generic name" value="Acetylsalicylic acid"/>
</dbReference>
<dbReference type="DrugBank" id="DB00131">
    <property type="generic name" value="Adenosine phosphate"/>
</dbReference>
<dbReference type="DrugBank" id="DB08597">
    <property type="generic name" value="Dorsomorphin"/>
</dbReference>
<dbReference type="DrugBank" id="DB12010">
    <property type="generic name" value="Fostamatinib"/>
</dbReference>
<dbReference type="DrugBank" id="DB12509">
    <property type="generic name" value="Imeglimin"/>
</dbReference>
<dbReference type="DrugBank" id="DB00914">
    <property type="generic name" value="Phenformin"/>
</dbReference>
<dbReference type="DrugBank" id="DB04462">
    <property type="generic name" value="Tetrabromo-2-Benzotriazole"/>
</dbReference>
<dbReference type="DrugBank" id="DB00273">
    <property type="generic name" value="Topiramate"/>
</dbReference>
<dbReference type="DrugCentral" id="P54619"/>
<dbReference type="GlyGen" id="P54619">
    <property type="glycosylation" value="1 site, 1 O-linked glycan (1 site)"/>
</dbReference>
<dbReference type="iPTMnet" id="P54619"/>
<dbReference type="PhosphoSitePlus" id="P54619"/>
<dbReference type="BioMuta" id="PRKAG1"/>
<dbReference type="DMDM" id="1703037"/>
<dbReference type="jPOST" id="P54619"/>
<dbReference type="MassIVE" id="P54619"/>
<dbReference type="PaxDb" id="9606-ENSP00000323867"/>
<dbReference type="PeptideAtlas" id="P54619"/>
<dbReference type="ProteomicsDB" id="3890"/>
<dbReference type="ProteomicsDB" id="56688">
    <molecule id="P54619-1"/>
</dbReference>
<dbReference type="Pumba" id="P54619"/>
<dbReference type="Antibodypedia" id="25778">
    <property type="antibodies" value="451 antibodies from 35 providers"/>
</dbReference>
<dbReference type="DNASU" id="5571"/>
<dbReference type="Ensembl" id="ENST00000316299.9">
    <molecule id="P54619-3"/>
    <property type="protein sequence ID" value="ENSP00000323867.5"/>
    <property type="gene ID" value="ENSG00000181929.13"/>
</dbReference>
<dbReference type="Ensembl" id="ENST00000548065.7">
    <molecule id="P54619-1"/>
    <property type="protein sequence ID" value="ENSP00000447433.1"/>
    <property type="gene ID" value="ENSG00000181929.13"/>
</dbReference>
<dbReference type="Ensembl" id="ENST00000552212.5">
    <molecule id="P54619-2"/>
    <property type="protein sequence ID" value="ENSP00000448972.1"/>
    <property type="gene ID" value="ENSG00000181929.13"/>
</dbReference>
<dbReference type="GeneID" id="5571"/>
<dbReference type="KEGG" id="hsa:5571"/>
<dbReference type="MANE-Select" id="ENST00000548065.7">
    <property type="protein sequence ID" value="ENSP00000447433.1"/>
    <property type="RefSeq nucleotide sequence ID" value="NM_002733.5"/>
    <property type="RefSeq protein sequence ID" value="NP_002724.1"/>
</dbReference>
<dbReference type="UCSC" id="uc001rsy.4">
    <molecule id="P54619-1"/>
    <property type="organism name" value="human"/>
</dbReference>
<dbReference type="AGR" id="HGNC:9385"/>
<dbReference type="CTD" id="5571"/>
<dbReference type="DisGeNET" id="5571"/>
<dbReference type="GeneCards" id="PRKAG1"/>
<dbReference type="HGNC" id="HGNC:9385">
    <property type="gene designation" value="PRKAG1"/>
</dbReference>
<dbReference type="HPA" id="ENSG00000181929">
    <property type="expression patterns" value="Low tissue specificity"/>
</dbReference>
<dbReference type="MIM" id="602742">
    <property type="type" value="gene"/>
</dbReference>
<dbReference type="neXtProt" id="NX_P54619"/>
<dbReference type="OpenTargets" id="ENSG00000181929"/>
<dbReference type="PharmGKB" id="PA33751"/>
<dbReference type="VEuPathDB" id="HostDB:ENSG00000181929"/>
<dbReference type="eggNOG" id="KOG1764">
    <property type="taxonomic scope" value="Eukaryota"/>
</dbReference>
<dbReference type="GeneTree" id="ENSGT00950000183019"/>
<dbReference type="HOGENOM" id="CLU_021740_3_0_1"/>
<dbReference type="InParanoid" id="P54619"/>
<dbReference type="OMA" id="TASIHPF"/>
<dbReference type="OrthoDB" id="449052at2759"/>
<dbReference type="PAN-GO" id="P54619">
    <property type="GO annotations" value="9 GO annotations based on evolutionary models"/>
</dbReference>
<dbReference type="PhylomeDB" id="P54619"/>
<dbReference type="TreeFam" id="TF313247"/>
<dbReference type="BRENDA" id="2.7.11.31">
    <property type="organism ID" value="2681"/>
</dbReference>
<dbReference type="PathwayCommons" id="P54619"/>
<dbReference type="Reactome" id="R-HSA-1445148">
    <property type="pathway name" value="Translocation of SLC2A4 (GLUT4) to the plasma membrane"/>
</dbReference>
<dbReference type="Reactome" id="R-HSA-1632852">
    <property type="pathway name" value="Macroautophagy"/>
</dbReference>
<dbReference type="Reactome" id="R-HSA-2151209">
    <property type="pathway name" value="Activation of PPARGC1A (PGC-1alpha) by phosphorylation"/>
</dbReference>
<dbReference type="Reactome" id="R-HSA-380972">
    <property type="pathway name" value="Energy dependent regulation of mTOR by LKB1-AMPK"/>
</dbReference>
<dbReference type="Reactome" id="R-HSA-5628897">
    <property type="pathway name" value="TP53 Regulates Metabolic Genes"/>
</dbReference>
<dbReference type="Reactome" id="R-HSA-6804756">
    <property type="pathway name" value="Regulation of TP53 Activity through Phosphorylation"/>
</dbReference>
<dbReference type="Reactome" id="R-HSA-9613354">
    <property type="pathway name" value="Lipophagy"/>
</dbReference>
<dbReference type="Reactome" id="R-HSA-9619483">
    <property type="pathway name" value="Activation of AMPK downstream of NMDARs"/>
</dbReference>
<dbReference type="SignaLink" id="P54619"/>
<dbReference type="SIGNOR" id="P54619"/>
<dbReference type="BioGRID-ORCS" id="5571">
    <property type="hits" value="59 hits in 1166 CRISPR screens"/>
</dbReference>
<dbReference type="ChiTaRS" id="PRKAG1">
    <property type="organism name" value="human"/>
</dbReference>
<dbReference type="EvolutionaryTrace" id="P54619"/>
<dbReference type="GeneWiki" id="PRKAG1"/>
<dbReference type="GenomeRNAi" id="5571"/>
<dbReference type="Pharos" id="P54619">
    <property type="development level" value="Tchem"/>
</dbReference>
<dbReference type="PRO" id="PR:P54619"/>
<dbReference type="Proteomes" id="UP000005640">
    <property type="component" value="Chromosome 12"/>
</dbReference>
<dbReference type="RNAct" id="P54619">
    <property type="molecule type" value="protein"/>
</dbReference>
<dbReference type="Bgee" id="ENSG00000181929">
    <property type="expression patterns" value="Expressed in gastrocnemius and 204 other cell types or tissues"/>
</dbReference>
<dbReference type="ExpressionAtlas" id="P54619">
    <property type="expression patterns" value="baseline and differential"/>
</dbReference>
<dbReference type="GO" id="GO:0005737">
    <property type="term" value="C:cytoplasm"/>
    <property type="evidence" value="ECO:0000318"/>
    <property type="project" value="GO_Central"/>
</dbReference>
<dbReference type="GO" id="GO:0005829">
    <property type="term" value="C:cytosol"/>
    <property type="evidence" value="ECO:0000304"/>
    <property type="project" value="Reactome"/>
</dbReference>
<dbReference type="GO" id="GO:0016020">
    <property type="term" value="C:membrane"/>
    <property type="evidence" value="ECO:0007005"/>
    <property type="project" value="UniProtKB"/>
</dbReference>
<dbReference type="GO" id="GO:0005654">
    <property type="term" value="C:nucleoplasm"/>
    <property type="evidence" value="ECO:0000304"/>
    <property type="project" value="Reactome"/>
</dbReference>
<dbReference type="GO" id="GO:0031588">
    <property type="term" value="C:nucleotide-activated protein kinase complex"/>
    <property type="evidence" value="ECO:0000353"/>
    <property type="project" value="ComplexPortal"/>
</dbReference>
<dbReference type="GO" id="GO:0005634">
    <property type="term" value="C:nucleus"/>
    <property type="evidence" value="ECO:0000314"/>
    <property type="project" value="ComplexPortal"/>
</dbReference>
<dbReference type="GO" id="GO:0043531">
    <property type="term" value="F:ADP binding"/>
    <property type="evidence" value="ECO:0000250"/>
    <property type="project" value="UniProtKB"/>
</dbReference>
<dbReference type="GO" id="GO:0016208">
    <property type="term" value="F:AMP binding"/>
    <property type="evidence" value="ECO:0000250"/>
    <property type="project" value="UniProtKB"/>
</dbReference>
<dbReference type="GO" id="GO:0004679">
    <property type="term" value="F:AMP-activated protein kinase activity"/>
    <property type="evidence" value="ECO:0007669"/>
    <property type="project" value="Ensembl"/>
</dbReference>
<dbReference type="GO" id="GO:0005524">
    <property type="term" value="F:ATP binding"/>
    <property type="evidence" value="ECO:0000250"/>
    <property type="project" value="UniProtKB"/>
</dbReference>
<dbReference type="GO" id="GO:0004691">
    <property type="term" value="F:cAMP-dependent protein kinase activity"/>
    <property type="evidence" value="ECO:0000304"/>
    <property type="project" value="ProtInc"/>
</dbReference>
<dbReference type="GO" id="GO:0008603">
    <property type="term" value="F:cAMP-dependent protein kinase regulator activity"/>
    <property type="evidence" value="ECO:0000304"/>
    <property type="project" value="BHF-UCL"/>
</dbReference>
<dbReference type="GO" id="GO:0019901">
    <property type="term" value="F:protein kinase binding"/>
    <property type="evidence" value="ECO:0000314"/>
    <property type="project" value="BHF-UCL"/>
</dbReference>
<dbReference type="GO" id="GO:0019887">
    <property type="term" value="F:protein kinase regulator activity"/>
    <property type="evidence" value="ECO:0000314"/>
    <property type="project" value="UniProtKB"/>
</dbReference>
<dbReference type="GO" id="GO:0044877">
    <property type="term" value="F:protein-containing complex binding"/>
    <property type="evidence" value="ECO:0007669"/>
    <property type="project" value="Ensembl"/>
</dbReference>
<dbReference type="GO" id="GO:0042149">
    <property type="term" value="P:cellular response to glucose starvation"/>
    <property type="evidence" value="ECO:0000318"/>
    <property type="project" value="GO_Central"/>
</dbReference>
<dbReference type="GO" id="GO:0031669">
    <property type="term" value="P:cellular response to nutrient levels"/>
    <property type="evidence" value="ECO:0000314"/>
    <property type="project" value="ComplexPortal"/>
</dbReference>
<dbReference type="GO" id="GO:0006633">
    <property type="term" value="P:fatty acid biosynthetic process"/>
    <property type="evidence" value="ECO:0007669"/>
    <property type="project" value="UniProtKB-KW"/>
</dbReference>
<dbReference type="GO" id="GO:0051170">
    <property type="term" value="P:import into nucleus"/>
    <property type="evidence" value="ECO:0007669"/>
    <property type="project" value="Ensembl"/>
</dbReference>
<dbReference type="GO" id="GO:0045722">
    <property type="term" value="P:positive regulation of gluconeogenesis"/>
    <property type="evidence" value="ECO:0000318"/>
    <property type="project" value="GO_Central"/>
</dbReference>
<dbReference type="GO" id="GO:0045860">
    <property type="term" value="P:positive regulation of protein kinase activity"/>
    <property type="evidence" value="ECO:0000304"/>
    <property type="project" value="BHF-UCL"/>
</dbReference>
<dbReference type="GO" id="GO:0006468">
    <property type="term" value="P:protein phosphorylation"/>
    <property type="evidence" value="ECO:0000304"/>
    <property type="project" value="ProtInc"/>
</dbReference>
<dbReference type="GO" id="GO:0043609">
    <property type="term" value="P:regulation of carbon utilization"/>
    <property type="evidence" value="ECO:0000318"/>
    <property type="project" value="GO_Central"/>
</dbReference>
<dbReference type="GO" id="GO:0051726">
    <property type="term" value="P:regulation of cell cycle"/>
    <property type="evidence" value="ECO:0000304"/>
    <property type="project" value="Reactome"/>
</dbReference>
<dbReference type="GO" id="GO:0006110">
    <property type="term" value="P:regulation of glycolytic process"/>
    <property type="evidence" value="ECO:0000318"/>
    <property type="project" value="GO_Central"/>
</dbReference>
<dbReference type="GO" id="GO:0007165">
    <property type="term" value="P:signal transduction"/>
    <property type="evidence" value="ECO:0000304"/>
    <property type="project" value="ProtInc"/>
</dbReference>
<dbReference type="GO" id="GO:0007283">
    <property type="term" value="P:spermatogenesis"/>
    <property type="evidence" value="ECO:0000304"/>
    <property type="project" value="ProtInc"/>
</dbReference>
<dbReference type="CDD" id="cd04618">
    <property type="entry name" value="CBS_euAMPK_gamma-like_repeat1"/>
    <property type="match status" value="1"/>
</dbReference>
<dbReference type="CDD" id="cd04641">
    <property type="entry name" value="CBS_euAMPK_gamma-like_repeat2"/>
    <property type="match status" value="1"/>
</dbReference>
<dbReference type="FunFam" id="3.10.580.10:FF:000003">
    <property type="entry name" value="Protein kinase AMP-activated non-catalytic subunit gamma 1"/>
    <property type="match status" value="1"/>
</dbReference>
<dbReference type="FunFam" id="3.10.580.10:FF:000004">
    <property type="entry name" value="Protein kinase AMP-activated non-catalytic subunit gamma 2"/>
    <property type="match status" value="1"/>
</dbReference>
<dbReference type="Gene3D" id="3.10.580.10">
    <property type="entry name" value="CBS-domain"/>
    <property type="match status" value="2"/>
</dbReference>
<dbReference type="IDEAL" id="IID00660"/>
<dbReference type="InterPro" id="IPR050511">
    <property type="entry name" value="AMPK_gamma/SDS23_families"/>
</dbReference>
<dbReference type="InterPro" id="IPR000644">
    <property type="entry name" value="CBS_dom"/>
</dbReference>
<dbReference type="InterPro" id="IPR046342">
    <property type="entry name" value="CBS_dom_sf"/>
</dbReference>
<dbReference type="PANTHER" id="PTHR13780:SF38">
    <property type="entry name" value="5'-AMP-ACTIVATED PROTEIN KINASE SUBUNIT GAMMA-1"/>
    <property type="match status" value="1"/>
</dbReference>
<dbReference type="PANTHER" id="PTHR13780">
    <property type="entry name" value="AMP-ACTIVATED PROTEIN KINASE, GAMMA REGULATORY SUBUNIT"/>
    <property type="match status" value="1"/>
</dbReference>
<dbReference type="Pfam" id="PF00571">
    <property type="entry name" value="CBS"/>
    <property type="match status" value="4"/>
</dbReference>
<dbReference type="SMART" id="SM00116">
    <property type="entry name" value="CBS"/>
    <property type="match status" value="4"/>
</dbReference>
<dbReference type="SUPFAM" id="SSF54631">
    <property type="entry name" value="CBS-domain pair"/>
    <property type="match status" value="2"/>
</dbReference>
<dbReference type="PROSITE" id="PS51371">
    <property type="entry name" value="CBS"/>
    <property type="match status" value="4"/>
</dbReference>
<gene>
    <name type="primary">PRKAG1</name>
</gene>
<name>AAKG1_HUMAN</name>